<gene>
    <name evidence="1" type="primary">trpD</name>
    <name type="ordered locus">BcerKBAB4_1146</name>
</gene>
<name>TRPD_BACMK</name>
<dbReference type="EC" id="2.4.2.18" evidence="1"/>
<dbReference type="EMBL" id="CP000903">
    <property type="protein sequence ID" value="ABY42395.1"/>
    <property type="molecule type" value="Genomic_DNA"/>
</dbReference>
<dbReference type="RefSeq" id="WP_002140867.1">
    <property type="nucleotide sequence ID" value="NC_010184.1"/>
</dbReference>
<dbReference type="SMR" id="A9VJV9"/>
<dbReference type="GeneID" id="66263724"/>
<dbReference type="KEGG" id="bwe:BcerKBAB4_1146"/>
<dbReference type="eggNOG" id="COG0547">
    <property type="taxonomic scope" value="Bacteria"/>
</dbReference>
<dbReference type="HOGENOM" id="CLU_034315_2_1_9"/>
<dbReference type="UniPathway" id="UPA00035">
    <property type="reaction ID" value="UER00041"/>
</dbReference>
<dbReference type="Proteomes" id="UP000002154">
    <property type="component" value="Chromosome"/>
</dbReference>
<dbReference type="GO" id="GO:0005829">
    <property type="term" value="C:cytosol"/>
    <property type="evidence" value="ECO:0007669"/>
    <property type="project" value="TreeGrafter"/>
</dbReference>
<dbReference type="GO" id="GO:0004048">
    <property type="term" value="F:anthranilate phosphoribosyltransferase activity"/>
    <property type="evidence" value="ECO:0007669"/>
    <property type="project" value="UniProtKB-UniRule"/>
</dbReference>
<dbReference type="GO" id="GO:0000287">
    <property type="term" value="F:magnesium ion binding"/>
    <property type="evidence" value="ECO:0007669"/>
    <property type="project" value="UniProtKB-UniRule"/>
</dbReference>
<dbReference type="GO" id="GO:0000162">
    <property type="term" value="P:L-tryptophan biosynthetic process"/>
    <property type="evidence" value="ECO:0007669"/>
    <property type="project" value="UniProtKB-UniRule"/>
</dbReference>
<dbReference type="FunFam" id="3.40.1030.10:FF:000002">
    <property type="entry name" value="Anthranilate phosphoribosyltransferase"/>
    <property type="match status" value="1"/>
</dbReference>
<dbReference type="Gene3D" id="3.40.1030.10">
    <property type="entry name" value="Nucleoside phosphorylase/phosphoribosyltransferase catalytic domain"/>
    <property type="match status" value="1"/>
</dbReference>
<dbReference type="Gene3D" id="1.20.970.10">
    <property type="entry name" value="Transferase, Pyrimidine Nucleoside Phosphorylase, Chain C"/>
    <property type="match status" value="1"/>
</dbReference>
<dbReference type="HAMAP" id="MF_00211">
    <property type="entry name" value="TrpD"/>
    <property type="match status" value="1"/>
</dbReference>
<dbReference type="InterPro" id="IPR005940">
    <property type="entry name" value="Anthranilate_Pribosyl_Tfrase"/>
</dbReference>
<dbReference type="InterPro" id="IPR000312">
    <property type="entry name" value="Glycosyl_Trfase_fam3"/>
</dbReference>
<dbReference type="InterPro" id="IPR017459">
    <property type="entry name" value="Glycosyl_Trfase_fam3_N_dom"/>
</dbReference>
<dbReference type="InterPro" id="IPR036320">
    <property type="entry name" value="Glycosyl_Trfase_fam3_N_dom_sf"/>
</dbReference>
<dbReference type="InterPro" id="IPR035902">
    <property type="entry name" value="Nuc_phospho_transferase"/>
</dbReference>
<dbReference type="NCBIfam" id="TIGR01245">
    <property type="entry name" value="trpD"/>
    <property type="match status" value="1"/>
</dbReference>
<dbReference type="PANTHER" id="PTHR43285">
    <property type="entry name" value="ANTHRANILATE PHOSPHORIBOSYLTRANSFERASE"/>
    <property type="match status" value="1"/>
</dbReference>
<dbReference type="PANTHER" id="PTHR43285:SF2">
    <property type="entry name" value="ANTHRANILATE PHOSPHORIBOSYLTRANSFERASE"/>
    <property type="match status" value="1"/>
</dbReference>
<dbReference type="Pfam" id="PF02885">
    <property type="entry name" value="Glycos_trans_3N"/>
    <property type="match status" value="1"/>
</dbReference>
<dbReference type="Pfam" id="PF00591">
    <property type="entry name" value="Glycos_transf_3"/>
    <property type="match status" value="1"/>
</dbReference>
<dbReference type="SUPFAM" id="SSF52418">
    <property type="entry name" value="Nucleoside phosphorylase/phosphoribosyltransferase catalytic domain"/>
    <property type="match status" value="1"/>
</dbReference>
<dbReference type="SUPFAM" id="SSF47648">
    <property type="entry name" value="Nucleoside phosphorylase/phosphoribosyltransferase N-terminal domain"/>
    <property type="match status" value="1"/>
</dbReference>
<organism>
    <name type="scientific">Bacillus mycoides (strain KBAB4)</name>
    <name type="common">Bacillus weihenstephanensis</name>
    <dbReference type="NCBI Taxonomy" id="315730"/>
    <lineage>
        <taxon>Bacteria</taxon>
        <taxon>Bacillati</taxon>
        <taxon>Bacillota</taxon>
        <taxon>Bacilli</taxon>
        <taxon>Bacillales</taxon>
        <taxon>Bacillaceae</taxon>
        <taxon>Bacillus</taxon>
        <taxon>Bacillus cereus group</taxon>
    </lineage>
</organism>
<evidence type="ECO:0000255" key="1">
    <source>
        <dbReference type="HAMAP-Rule" id="MF_00211"/>
    </source>
</evidence>
<comment type="function">
    <text evidence="1">Catalyzes the transfer of the phosphoribosyl group of 5-phosphorylribose-1-pyrophosphate (PRPP) to anthranilate to yield N-(5'-phosphoribosyl)-anthranilate (PRA).</text>
</comment>
<comment type="catalytic activity">
    <reaction evidence="1">
        <text>N-(5-phospho-beta-D-ribosyl)anthranilate + diphosphate = 5-phospho-alpha-D-ribose 1-diphosphate + anthranilate</text>
        <dbReference type="Rhea" id="RHEA:11768"/>
        <dbReference type="ChEBI" id="CHEBI:16567"/>
        <dbReference type="ChEBI" id="CHEBI:18277"/>
        <dbReference type="ChEBI" id="CHEBI:33019"/>
        <dbReference type="ChEBI" id="CHEBI:58017"/>
        <dbReference type="EC" id="2.4.2.18"/>
    </reaction>
</comment>
<comment type="cofactor">
    <cofactor evidence="1">
        <name>Mg(2+)</name>
        <dbReference type="ChEBI" id="CHEBI:18420"/>
    </cofactor>
    <text evidence="1">Binds 2 magnesium ions per monomer.</text>
</comment>
<comment type="pathway">
    <text evidence="1">Amino-acid biosynthesis; L-tryptophan biosynthesis; L-tryptophan from chorismate: step 2/5.</text>
</comment>
<comment type="subunit">
    <text evidence="1">Homodimer.</text>
</comment>
<comment type="similarity">
    <text evidence="1">Belongs to the anthranilate phosphoribosyltransferase family.</text>
</comment>
<accession>A9VJV9</accession>
<reference key="1">
    <citation type="journal article" date="2008" name="Chem. Biol. Interact.">
        <title>Extending the Bacillus cereus group genomics to putative food-borne pathogens of different toxicity.</title>
        <authorList>
            <person name="Lapidus A."/>
            <person name="Goltsman E."/>
            <person name="Auger S."/>
            <person name="Galleron N."/>
            <person name="Segurens B."/>
            <person name="Dossat C."/>
            <person name="Land M.L."/>
            <person name="Broussolle V."/>
            <person name="Brillard J."/>
            <person name="Guinebretiere M.-H."/>
            <person name="Sanchis V."/>
            <person name="Nguen-the C."/>
            <person name="Lereclus D."/>
            <person name="Richardson P."/>
            <person name="Wincker P."/>
            <person name="Weissenbach J."/>
            <person name="Ehrlich S.D."/>
            <person name="Sorokin A."/>
        </authorList>
    </citation>
    <scope>NUCLEOTIDE SEQUENCE [LARGE SCALE GENOMIC DNA]</scope>
    <source>
        <strain>KBAB4</strain>
    </source>
</reference>
<proteinExistence type="inferred from homology"/>
<keyword id="KW-0028">Amino-acid biosynthesis</keyword>
<keyword id="KW-0057">Aromatic amino acid biosynthesis</keyword>
<keyword id="KW-0328">Glycosyltransferase</keyword>
<keyword id="KW-0460">Magnesium</keyword>
<keyword id="KW-0479">Metal-binding</keyword>
<keyword id="KW-0808">Transferase</keyword>
<keyword id="KW-0822">Tryptophan biosynthesis</keyword>
<feature type="chain" id="PRO_1000099782" description="Anthranilate phosphoribosyltransferase">
    <location>
        <begin position="1"/>
        <end position="341"/>
    </location>
</feature>
<feature type="binding site" evidence="1">
    <location>
        <position position="79"/>
    </location>
    <ligand>
        <name>5-phospho-alpha-D-ribose 1-diphosphate</name>
        <dbReference type="ChEBI" id="CHEBI:58017"/>
    </ligand>
</feature>
<feature type="binding site" evidence="1">
    <location>
        <position position="79"/>
    </location>
    <ligand>
        <name>anthranilate</name>
        <dbReference type="ChEBI" id="CHEBI:16567"/>
        <label>1</label>
    </ligand>
</feature>
<feature type="binding site" evidence="1">
    <location>
        <begin position="82"/>
        <end position="83"/>
    </location>
    <ligand>
        <name>5-phospho-alpha-D-ribose 1-diphosphate</name>
        <dbReference type="ChEBI" id="CHEBI:58017"/>
    </ligand>
</feature>
<feature type="binding site" evidence="1">
    <location>
        <position position="87"/>
    </location>
    <ligand>
        <name>5-phospho-alpha-D-ribose 1-diphosphate</name>
        <dbReference type="ChEBI" id="CHEBI:58017"/>
    </ligand>
</feature>
<feature type="binding site" evidence="1">
    <location>
        <begin position="89"/>
        <end position="92"/>
    </location>
    <ligand>
        <name>5-phospho-alpha-D-ribose 1-diphosphate</name>
        <dbReference type="ChEBI" id="CHEBI:58017"/>
    </ligand>
</feature>
<feature type="binding site" evidence="1">
    <location>
        <position position="91"/>
    </location>
    <ligand>
        <name>Mg(2+)</name>
        <dbReference type="ChEBI" id="CHEBI:18420"/>
        <label>1</label>
    </ligand>
</feature>
<feature type="binding site" evidence="1">
    <location>
        <begin position="107"/>
        <end position="115"/>
    </location>
    <ligand>
        <name>5-phospho-alpha-D-ribose 1-diphosphate</name>
        <dbReference type="ChEBI" id="CHEBI:58017"/>
    </ligand>
</feature>
<feature type="binding site" evidence="1">
    <location>
        <position position="110"/>
    </location>
    <ligand>
        <name>anthranilate</name>
        <dbReference type="ChEBI" id="CHEBI:16567"/>
        <label>1</label>
    </ligand>
</feature>
<feature type="binding site" evidence="1">
    <location>
        <position position="119"/>
    </location>
    <ligand>
        <name>5-phospho-alpha-D-ribose 1-diphosphate</name>
        <dbReference type="ChEBI" id="CHEBI:58017"/>
    </ligand>
</feature>
<feature type="binding site" evidence="1">
    <location>
        <position position="165"/>
    </location>
    <ligand>
        <name>anthranilate</name>
        <dbReference type="ChEBI" id="CHEBI:16567"/>
        <label>2</label>
    </ligand>
</feature>
<feature type="binding site" evidence="1">
    <location>
        <position position="224"/>
    </location>
    <ligand>
        <name>Mg(2+)</name>
        <dbReference type="ChEBI" id="CHEBI:18420"/>
        <label>2</label>
    </ligand>
</feature>
<feature type="binding site" evidence="1">
    <location>
        <position position="225"/>
    </location>
    <ligand>
        <name>Mg(2+)</name>
        <dbReference type="ChEBI" id="CHEBI:18420"/>
        <label>1</label>
    </ligand>
</feature>
<feature type="binding site" evidence="1">
    <location>
        <position position="225"/>
    </location>
    <ligand>
        <name>Mg(2+)</name>
        <dbReference type="ChEBI" id="CHEBI:18420"/>
        <label>2</label>
    </ligand>
</feature>
<protein>
    <recommendedName>
        <fullName evidence="1">Anthranilate phosphoribosyltransferase</fullName>
        <ecNumber evidence="1">2.4.2.18</ecNumber>
    </recommendedName>
</protein>
<sequence length="341" mass="36869">MNSYLRKLVEGQHLTEEEMYEAGLLLLSDNILESEVAAFLVLLKAKGETAEEIYGLVRALREKALPFSNHIKGAMDNCGTGGDGAQTFNISTTSAFVLAGAGVKVAKHGNRAVSSKTGSADLLEELGVNISCTPGEIDYLLENVGIAFLFAPAMHPALRRIMKIRKELNVPTIFNLIGPLTNPVNLETQFVGIYKRDMLLPVAEVLQKLGRKQALVVNGSGFLDEASLQGENHVVVLKDNEIVEMSIDPEKYGFSRVKNEEIRGGNSKENAKITLGVLSGEKSVYRDTVLLNAGLALFANGRAETIEEGITLATHSIDSGKALAKLNLLIAASHEKLERVN</sequence>